<gene>
    <name type="primary">RRT14</name>
    <name type="ordered locus">PAS_chr4_0117</name>
</gene>
<protein>
    <recommendedName>
        <fullName>Regulator of rDNA transcription 14</fullName>
    </recommendedName>
</protein>
<organism>
    <name type="scientific">Komagataella phaffii (strain GS115 / ATCC 20864)</name>
    <name type="common">Yeast</name>
    <name type="synonym">Pichia pastoris</name>
    <dbReference type="NCBI Taxonomy" id="644223"/>
    <lineage>
        <taxon>Eukaryota</taxon>
        <taxon>Fungi</taxon>
        <taxon>Dikarya</taxon>
        <taxon>Ascomycota</taxon>
        <taxon>Saccharomycotina</taxon>
        <taxon>Pichiomycetes</taxon>
        <taxon>Pichiales</taxon>
        <taxon>Pichiaceae</taxon>
        <taxon>Komagataella</taxon>
    </lineage>
</organism>
<dbReference type="EMBL" id="FN392322">
    <property type="protein sequence ID" value="CAY71343.1"/>
    <property type="molecule type" value="Genomic_DNA"/>
</dbReference>
<dbReference type="RefSeq" id="XP_002493522.1">
    <property type="nucleotide sequence ID" value="XM_002493477.1"/>
</dbReference>
<dbReference type="SMR" id="C4R6W8"/>
<dbReference type="FunCoup" id="C4R6W8">
    <property type="interactions" value="265"/>
</dbReference>
<dbReference type="STRING" id="644223.C4R6W8"/>
<dbReference type="EnsemblFungi" id="CAY71343">
    <property type="protein sequence ID" value="CAY71343"/>
    <property type="gene ID" value="PAS_chr4_0117"/>
</dbReference>
<dbReference type="GeneID" id="8201203"/>
<dbReference type="KEGG" id="ppa:PAS_chr4_0117"/>
<dbReference type="eggNOG" id="ENOG502SG80">
    <property type="taxonomic scope" value="Eukaryota"/>
</dbReference>
<dbReference type="HOGENOM" id="CLU_095038_0_0_1"/>
<dbReference type="InParanoid" id="C4R6W8"/>
<dbReference type="OrthoDB" id="4069371at2759"/>
<dbReference type="Proteomes" id="UP000000314">
    <property type="component" value="Chromosome 4"/>
</dbReference>
<dbReference type="GO" id="GO:0005730">
    <property type="term" value="C:nucleolus"/>
    <property type="evidence" value="ECO:0007669"/>
    <property type="project" value="UniProtKB-SubCell"/>
</dbReference>
<dbReference type="InterPro" id="IPR031404">
    <property type="entry name" value="Rrt14"/>
</dbReference>
<dbReference type="Pfam" id="PF17075">
    <property type="entry name" value="RRT14"/>
    <property type="match status" value="1"/>
</dbReference>
<reference key="1">
    <citation type="journal article" date="2009" name="Nat. Biotechnol.">
        <title>Genome sequence of the recombinant protein production host Pichia pastoris.</title>
        <authorList>
            <person name="De Schutter K."/>
            <person name="Lin Y.-C."/>
            <person name="Tiels P."/>
            <person name="Van Hecke A."/>
            <person name="Glinka S."/>
            <person name="Weber-Lehmann J."/>
            <person name="Rouze P."/>
            <person name="Van de Peer Y."/>
            <person name="Callewaert N."/>
        </authorList>
    </citation>
    <scope>NUCLEOTIDE SEQUENCE [LARGE SCALE GENOMIC DNA]</scope>
    <source>
        <strain>GS115 / ATCC 20864</strain>
    </source>
</reference>
<name>RRT14_KOMPG</name>
<sequence>MNKFSSDSSRTTAQSTINKLLVNLIPGSQLNDAKVAKKAKKSSSAKIISDQIGSRMEFKRNEEKRRKFLKQNNLKKRKMKRKSKDLEAQLERIARLSNIKELQQMSEDSNDPLLDQVIDKKITALLSWTTDNSELGTEIEKLKKDILNTDNEEVRRRKSYRDEEREEAEFRSEVEKGSIAYPGLTPGLAPVGLSDDEDDEEEDESDGFDKEEEEDQFSE</sequence>
<keyword id="KW-0539">Nucleus</keyword>
<keyword id="KW-1185">Reference proteome</keyword>
<keyword id="KW-0804">Transcription</keyword>
<keyword id="KW-0805">Transcription regulation</keyword>
<feature type="chain" id="PRO_0000404346" description="Regulator of rDNA transcription 14">
    <location>
        <begin position="1"/>
        <end position="219"/>
    </location>
</feature>
<feature type="region of interest" description="Disordered" evidence="2">
    <location>
        <begin position="153"/>
        <end position="219"/>
    </location>
</feature>
<feature type="compositionally biased region" description="Basic and acidic residues" evidence="2">
    <location>
        <begin position="153"/>
        <end position="176"/>
    </location>
</feature>
<feature type="compositionally biased region" description="Acidic residues" evidence="2">
    <location>
        <begin position="194"/>
        <end position="219"/>
    </location>
</feature>
<proteinExistence type="inferred from homology"/>
<accession>C4R6W8</accession>
<evidence type="ECO:0000250" key="1"/>
<evidence type="ECO:0000256" key="2">
    <source>
        <dbReference type="SAM" id="MobiDB-lite"/>
    </source>
</evidence>
<evidence type="ECO:0000305" key="3"/>
<comment type="function">
    <text evidence="1">Involved in ribosome biogenesis, probably through modulation of rDNA transcription.</text>
</comment>
<comment type="subcellular location">
    <subcellularLocation>
        <location evidence="1">Nucleus</location>
        <location evidence="1">Nucleolus</location>
    </subcellularLocation>
</comment>
<comment type="similarity">
    <text evidence="3">Belongs to the RRT14 family.</text>
</comment>